<comment type="function">
    <text evidence="1 2 3 4">Catalyzes the N-methylation of nicotinamide using the universal methyl donor S-adenosyl-L-methionine to form N1-methylnicotinamide and S-adenosyl-L-homocysteine, a predominant nicotinamide/vitamin B3 clearance pathway (PubMed:26168293, PubMed:29483571). Plays a central role in regulating cellular methylation potential, by consuming S-adenosyl-L-methionine and limiting its availability for other methyltransferases (By similarity). Actively mediates genome-wide epigenetic and transcriptional changes through hypomethylation of repressive chromatin marks, such as H3K27me3. In a developmental context, contributes to low levels of the repressive histone marks that characterize pluripotent embryonic stem cell pre-implantation state (By similarity). Acts as a metabolic regulator primarily on white adipose tissue energy expenditure as well as hepatic gluconeogenesis and cholesterol biosynthesis (PubMed:24717514, PubMed:26168293). In white adipocytes, regulates polyamine flux by consuming S-adenosyl-L-methionine which provides for propylamine group in polyamine biosynthesis, whereas by consuming nicotinamide controls NAD(+) levels through the salvage pathway (PubMed:24717514). Via its product N1-methylnicotinamide regulates protein acetylation in hepatocytes, by repressing the ubiquitination and increasing the stability of SIRT1 deacetylase (PubMed:26168293). Can also N-methylate other pyridines structurally related to nicotinamide and play a role in xenobiotic detoxification (By similarity).</text>
</comment>
<comment type="catalytic activity">
    <reaction evidence="3 4">
        <text>nicotinamide + S-adenosyl-L-methionine = 1-methylnicotinamide + S-adenosyl-L-homocysteine</text>
        <dbReference type="Rhea" id="RHEA:23884"/>
        <dbReference type="ChEBI" id="CHEBI:16797"/>
        <dbReference type="ChEBI" id="CHEBI:17154"/>
        <dbReference type="ChEBI" id="CHEBI:57856"/>
        <dbReference type="ChEBI" id="CHEBI:59789"/>
        <dbReference type="EC" id="2.1.1.1"/>
    </reaction>
    <physiologicalReaction direction="left-to-right" evidence="8 9">
        <dbReference type="Rhea" id="RHEA:23885"/>
    </physiologicalReaction>
</comment>
<comment type="activity regulation">
    <text evidence="4">Inhibited by 6-methoxynicotinamide (JBSNF-000088).</text>
</comment>
<comment type="pathway">
    <text evidence="1">Cofactor metabolism.</text>
</comment>
<comment type="pathway">
    <text evidence="1">Amino-acid degradation.</text>
</comment>
<comment type="subunit">
    <text evidence="1">Monomer.</text>
</comment>
<comment type="subcellular location">
    <subcellularLocation>
        <location>Cytoplasm</location>
    </subcellularLocation>
</comment>
<comment type="tissue specificity">
    <text evidence="2">Expressed in white adipose tissue and liver (at protein level).</text>
</comment>
<comment type="induction">
    <text evidence="2">Up-regulated in white adipose tissue and liver in response to high-fat diet.</text>
</comment>
<comment type="PTM">
    <text evidence="1">Deiminated by PADI1 and PADI2.</text>
</comment>
<comment type="similarity">
    <text evidence="7">Belongs to the class I-like SAM-binding methyltransferase superfamily. NNMT/PNMT/TEMT family.</text>
</comment>
<evidence type="ECO:0000250" key="1">
    <source>
        <dbReference type="UniProtKB" id="P40261"/>
    </source>
</evidence>
<evidence type="ECO:0000269" key="2">
    <source>
    </source>
</evidence>
<evidence type="ECO:0000269" key="3">
    <source>
    </source>
</evidence>
<evidence type="ECO:0000269" key="4">
    <source>
    </source>
</evidence>
<evidence type="ECO:0000269" key="5">
    <source ref="6"/>
</evidence>
<evidence type="ECO:0000303" key="6">
    <source>
    </source>
</evidence>
<evidence type="ECO:0000305" key="7"/>
<evidence type="ECO:0000305" key="8">
    <source>
    </source>
</evidence>
<evidence type="ECO:0000305" key="9">
    <source>
    </source>
</evidence>
<evidence type="ECO:0007744" key="10">
    <source>
        <dbReference type="PDB" id="2I62"/>
    </source>
</evidence>
<evidence type="ECO:0007829" key="11">
    <source>
        <dbReference type="PDB" id="2I62"/>
    </source>
</evidence>
<evidence type="ECO:0007829" key="12">
    <source>
        <dbReference type="PDB" id="5XVK"/>
    </source>
</evidence>
<protein>
    <recommendedName>
        <fullName evidence="6">Nicotinamide N-methyltransferase</fullName>
        <ecNumber evidence="3 4">2.1.1.1</ecNumber>
    </recommendedName>
</protein>
<keyword id="KW-0002">3D-structure</keyword>
<keyword id="KW-0164">Citrullination</keyword>
<keyword id="KW-0963">Cytoplasm</keyword>
<keyword id="KW-0489">Methyltransferase</keyword>
<keyword id="KW-1185">Reference proteome</keyword>
<keyword id="KW-0949">S-adenosyl-L-methionine</keyword>
<keyword id="KW-0808">Transferase</keyword>
<gene>
    <name type="primary">Nnmt</name>
</gene>
<organism>
    <name type="scientific">Mus musculus</name>
    <name type="common">Mouse</name>
    <dbReference type="NCBI Taxonomy" id="10090"/>
    <lineage>
        <taxon>Eukaryota</taxon>
        <taxon>Metazoa</taxon>
        <taxon>Chordata</taxon>
        <taxon>Craniata</taxon>
        <taxon>Vertebrata</taxon>
        <taxon>Euteleostomi</taxon>
        <taxon>Mammalia</taxon>
        <taxon>Eutheria</taxon>
        <taxon>Euarchontoglires</taxon>
        <taxon>Glires</taxon>
        <taxon>Rodentia</taxon>
        <taxon>Myomorpha</taxon>
        <taxon>Muroidea</taxon>
        <taxon>Muridae</taxon>
        <taxon>Murinae</taxon>
        <taxon>Mus</taxon>
        <taxon>Mus</taxon>
    </lineage>
</organism>
<proteinExistence type="evidence at protein level"/>
<name>NNMT_MOUSE</name>
<feature type="chain" id="PRO_0000159707" description="Nicotinamide N-methyltransferase">
    <location>
        <begin position="1"/>
        <end position="264"/>
    </location>
</feature>
<feature type="binding site" evidence="4 5">
    <location>
        <position position="20"/>
    </location>
    <ligand>
        <name>S-adenosyl-L-methionine</name>
        <dbReference type="ChEBI" id="CHEBI:59789"/>
    </ligand>
</feature>
<feature type="binding site" evidence="4 5">
    <location>
        <position position="25"/>
    </location>
    <ligand>
        <name>S-adenosyl-L-methionine</name>
        <dbReference type="ChEBI" id="CHEBI:59789"/>
    </ligand>
</feature>
<feature type="binding site" evidence="4 5">
    <location>
        <position position="63"/>
    </location>
    <ligand>
        <name>S-adenosyl-L-methionine</name>
        <dbReference type="ChEBI" id="CHEBI:59789"/>
    </ligand>
</feature>
<feature type="binding site" evidence="4 5">
    <location>
        <position position="69"/>
    </location>
    <ligand>
        <name>S-adenosyl-L-methionine</name>
        <dbReference type="ChEBI" id="CHEBI:59789"/>
    </ligand>
</feature>
<feature type="binding site" evidence="4 5">
    <location>
        <position position="85"/>
    </location>
    <ligand>
        <name>S-adenosyl-L-methionine</name>
        <dbReference type="ChEBI" id="CHEBI:59789"/>
    </ligand>
</feature>
<feature type="binding site" evidence="4 5">
    <location>
        <position position="87"/>
    </location>
    <ligand>
        <name>S-adenosyl-L-methionine</name>
        <dbReference type="ChEBI" id="CHEBI:59789"/>
    </ligand>
</feature>
<feature type="binding site" evidence="4 5">
    <location>
        <position position="90"/>
    </location>
    <ligand>
        <name>S-adenosyl-L-methionine</name>
        <dbReference type="ChEBI" id="CHEBI:59789"/>
    </ligand>
</feature>
<feature type="binding site" evidence="4 5">
    <location>
        <begin position="142"/>
        <end position="143"/>
    </location>
    <ligand>
        <name>S-adenosyl-L-methionine</name>
        <dbReference type="ChEBI" id="CHEBI:59789"/>
    </ligand>
</feature>
<feature type="binding site" evidence="4 5">
    <location>
        <position position="163"/>
    </location>
    <ligand>
        <name>S-adenosyl-L-methionine</name>
        <dbReference type="ChEBI" id="CHEBI:59789"/>
    </ligand>
</feature>
<feature type="binding site" evidence="1">
    <location>
        <position position="197"/>
    </location>
    <ligand>
        <name>nicotinamide</name>
        <dbReference type="ChEBI" id="CHEBI:17154"/>
    </ligand>
</feature>
<feature type="binding site" evidence="1">
    <location>
        <position position="213"/>
    </location>
    <ligand>
        <name>nicotinamide</name>
        <dbReference type="ChEBI" id="CHEBI:17154"/>
    </ligand>
</feature>
<feature type="modified residue" description="Citrulline; alternate" evidence="1">
    <location>
        <position position="18"/>
    </location>
</feature>
<feature type="modified residue" description="Citrulline; alternate" evidence="1">
    <location>
        <position position="132"/>
    </location>
</feature>
<feature type="modified residue" description="Citrulline; alternate" evidence="1">
    <location>
        <position position="181"/>
    </location>
</feature>
<feature type="mutagenesis site" description="Loss of N-methyltransferase activity." evidence="3">
    <original>Y</original>
    <variation>W</variation>
    <location>
        <position position="20"/>
    </location>
</feature>
<feature type="mutagenesis site" description="Loss of N-methyltransferase activity." evidence="3">
    <original>A</original>
    <variation>W</variation>
    <location>
        <position position="198"/>
    </location>
</feature>
<feature type="helix" evidence="11">
    <location>
        <begin position="8"/>
        <end position="14"/>
    </location>
</feature>
<feature type="helix" evidence="11">
    <location>
        <begin position="17"/>
        <end position="25"/>
    </location>
</feature>
<feature type="strand" evidence="12">
    <location>
        <begin position="28"/>
        <end position="30"/>
    </location>
</feature>
<feature type="helix" evidence="11">
    <location>
        <begin position="32"/>
        <end position="50"/>
    </location>
</feature>
<feature type="strand" evidence="11">
    <location>
        <begin position="51"/>
        <end position="53"/>
    </location>
</feature>
<feature type="strand" evidence="11">
    <location>
        <begin position="56"/>
        <end position="63"/>
    </location>
</feature>
<feature type="helix" evidence="11">
    <location>
        <begin position="69"/>
        <end position="71"/>
    </location>
</feature>
<feature type="helix" evidence="11">
    <location>
        <begin position="74"/>
        <end position="76"/>
    </location>
</feature>
<feature type="strand" evidence="11">
    <location>
        <begin position="78"/>
        <end position="86"/>
    </location>
</feature>
<feature type="helix" evidence="11">
    <location>
        <begin position="88"/>
        <end position="98"/>
    </location>
</feature>
<feature type="helix" evidence="11">
    <location>
        <begin position="108"/>
        <end position="117"/>
    </location>
</feature>
<feature type="turn" evidence="11">
    <location>
        <begin position="118"/>
        <end position="120"/>
    </location>
</feature>
<feature type="helix" evidence="11">
    <location>
        <begin position="124"/>
        <end position="134"/>
    </location>
</feature>
<feature type="strand" evidence="11">
    <location>
        <begin position="135"/>
        <end position="140"/>
    </location>
</feature>
<feature type="strand" evidence="11">
    <location>
        <begin position="145"/>
        <end position="147"/>
    </location>
</feature>
<feature type="turn" evidence="11">
    <location>
        <begin position="148"/>
        <end position="151"/>
    </location>
</feature>
<feature type="strand" evidence="11">
    <location>
        <begin position="157"/>
        <end position="164"/>
    </location>
</feature>
<feature type="helix" evidence="11">
    <location>
        <begin position="166"/>
        <end position="169"/>
    </location>
</feature>
<feature type="helix" evidence="11">
    <location>
        <begin position="173"/>
        <end position="184"/>
    </location>
</feature>
<feature type="strand" evidence="11">
    <location>
        <begin position="187"/>
        <end position="200"/>
    </location>
</feature>
<feature type="strand" evidence="11">
    <location>
        <begin position="203"/>
        <end position="206"/>
    </location>
</feature>
<feature type="strand" evidence="11">
    <location>
        <begin position="209"/>
        <end position="212"/>
    </location>
</feature>
<feature type="helix" evidence="11">
    <location>
        <begin position="218"/>
        <end position="227"/>
    </location>
</feature>
<feature type="strand" evidence="11">
    <location>
        <begin position="231"/>
        <end position="238"/>
    </location>
</feature>
<feature type="turn" evidence="11">
    <location>
        <begin position="244"/>
        <end position="246"/>
    </location>
</feature>
<feature type="strand" evidence="11">
    <location>
        <begin position="252"/>
        <end position="258"/>
    </location>
</feature>
<sequence length="264" mass="29598">MESGFTSKDTYLSHFNPRDYLEKYYSFGSRHCAENEILRHLLKNLFKIFCLGAVKGELLIDIGSGPTIYQLLSACESFTEIIVSDYTDQNLWELQKWLKKEPGAFDWSPVVTYVCDLEGNRMKGPEKEEKLRRAIKQVLKCDVTQSQPLGGVSLPPADCLLSTLCLDAACPDLPAYRTALRNLGSLLKPGGFLVMVDALKSSYYMIGEQKFSSLPLGWETVRDAVEEAGYTIEQFEVISQNYSSTTSNNEGLFSLVGRKPGRSE</sequence>
<accession>O55239</accession>
<dbReference type="EC" id="2.1.1.1" evidence="3 4"/>
<dbReference type="EMBL" id="U86105">
    <property type="protein sequence ID" value="AAB94331.1"/>
    <property type="molecule type" value="mRNA"/>
</dbReference>
<dbReference type="EMBL" id="U86106">
    <property type="protein sequence ID" value="AAB94332.1"/>
    <property type="molecule type" value="mRNA"/>
</dbReference>
<dbReference type="EMBL" id="U86108">
    <property type="protein sequence ID" value="AAB94334.1"/>
    <property type="molecule type" value="mRNA"/>
</dbReference>
<dbReference type="EMBL" id="U86107">
    <property type="protein sequence ID" value="AAB94333.1"/>
    <property type="molecule type" value="mRNA"/>
</dbReference>
<dbReference type="EMBL" id="AF044960">
    <property type="protein sequence ID" value="AAC77360.1"/>
    <property type="molecule type" value="Genomic_DNA"/>
</dbReference>
<dbReference type="EMBL" id="AF029756">
    <property type="protein sequence ID" value="AAC77360.1"/>
    <property type="status" value="JOINED"/>
    <property type="molecule type" value="Genomic_DNA"/>
</dbReference>
<dbReference type="EMBL" id="BC028757">
    <property type="protein sequence ID" value="AAH28757.1"/>
    <property type="molecule type" value="mRNA"/>
</dbReference>
<dbReference type="CCDS" id="CCDS23157.1"/>
<dbReference type="RefSeq" id="NP_001396191.1">
    <property type="nucleotide sequence ID" value="NM_001409262.1"/>
</dbReference>
<dbReference type="RefSeq" id="NP_001396192.1">
    <property type="nucleotide sequence ID" value="NM_001409263.1"/>
</dbReference>
<dbReference type="RefSeq" id="NP_035054.1">
    <property type="nucleotide sequence ID" value="NM_010924.4"/>
</dbReference>
<dbReference type="RefSeq" id="XP_011240719.1">
    <property type="nucleotide sequence ID" value="XM_011242417.1"/>
</dbReference>
<dbReference type="PDB" id="2I62">
    <property type="method" value="X-ray"/>
    <property type="resolution" value="1.80 A"/>
    <property type="chains" value="A/B/C/D=1-264"/>
</dbReference>
<dbReference type="PDB" id="5XVK">
    <property type="method" value="X-ray"/>
    <property type="resolution" value="1.88 A"/>
    <property type="chains" value="A/B=1-264"/>
</dbReference>
<dbReference type="PDB" id="5YJI">
    <property type="method" value="X-ray"/>
    <property type="resolution" value="1.99 A"/>
    <property type="chains" value="A/B=1-264"/>
</dbReference>
<dbReference type="PDBsum" id="2I62"/>
<dbReference type="PDBsum" id="5XVK"/>
<dbReference type="PDBsum" id="5YJI"/>
<dbReference type="SMR" id="O55239"/>
<dbReference type="FunCoup" id="O55239">
    <property type="interactions" value="352"/>
</dbReference>
<dbReference type="STRING" id="10090.ENSMUSP00000034808"/>
<dbReference type="BindingDB" id="O55239"/>
<dbReference type="ChEMBL" id="CHEMBL4295666"/>
<dbReference type="iPTMnet" id="O55239"/>
<dbReference type="PhosphoSitePlus" id="O55239"/>
<dbReference type="jPOST" id="O55239"/>
<dbReference type="PaxDb" id="10090-ENSMUSP00000034808"/>
<dbReference type="PeptideAtlas" id="O55239"/>
<dbReference type="ProteomicsDB" id="293696"/>
<dbReference type="Pumba" id="O55239"/>
<dbReference type="Antibodypedia" id="18379">
    <property type="antibodies" value="503 antibodies from 34 providers"/>
</dbReference>
<dbReference type="DNASU" id="18113"/>
<dbReference type="Ensembl" id="ENSMUST00000034808.12">
    <property type="protein sequence ID" value="ENSMUSP00000034808.6"/>
    <property type="gene ID" value="ENSMUSG00000032271.14"/>
</dbReference>
<dbReference type="GeneID" id="18113"/>
<dbReference type="KEGG" id="mmu:18113"/>
<dbReference type="UCSC" id="uc009pik.1">
    <property type="organism name" value="mouse"/>
</dbReference>
<dbReference type="AGR" id="MGI:1099443"/>
<dbReference type="CTD" id="4837"/>
<dbReference type="MGI" id="MGI:1099443">
    <property type="gene designation" value="Nnmt"/>
</dbReference>
<dbReference type="VEuPathDB" id="HostDB:ENSMUSG00000032271"/>
<dbReference type="eggNOG" id="KOG4564">
    <property type="taxonomic scope" value="Eukaryota"/>
</dbReference>
<dbReference type="GeneTree" id="ENSGT00390000011708"/>
<dbReference type="HOGENOM" id="CLU_082526_1_1_1"/>
<dbReference type="InParanoid" id="O55239"/>
<dbReference type="OMA" id="CLESACY"/>
<dbReference type="OrthoDB" id="10050085at2759"/>
<dbReference type="PhylomeDB" id="O55239"/>
<dbReference type="TreeFam" id="TF313114"/>
<dbReference type="BRENDA" id="2.1.1.1">
    <property type="organism ID" value="3474"/>
</dbReference>
<dbReference type="Reactome" id="R-MMU-156581">
    <property type="pathway name" value="Methylation"/>
</dbReference>
<dbReference type="Reactome" id="R-MMU-197264">
    <property type="pathway name" value="Nicotinamide salvaging"/>
</dbReference>
<dbReference type="BioGRID-ORCS" id="18113">
    <property type="hits" value="2 hits in 80 CRISPR screens"/>
</dbReference>
<dbReference type="ChiTaRS" id="Nnmt">
    <property type="organism name" value="mouse"/>
</dbReference>
<dbReference type="EvolutionaryTrace" id="O55239"/>
<dbReference type="PRO" id="PR:O55239"/>
<dbReference type="Proteomes" id="UP000000589">
    <property type="component" value="Chromosome 9"/>
</dbReference>
<dbReference type="RNAct" id="O55239">
    <property type="molecule type" value="protein"/>
</dbReference>
<dbReference type="Bgee" id="ENSMUSG00000032271">
    <property type="expression patterns" value="Expressed in left lobe of liver and 126 other cell types or tissues"/>
</dbReference>
<dbReference type="ExpressionAtlas" id="O55239">
    <property type="expression patterns" value="baseline and differential"/>
</dbReference>
<dbReference type="GO" id="GO:0005829">
    <property type="term" value="C:cytosol"/>
    <property type="evidence" value="ECO:0000314"/>
    <property type="project" value="MGI"/>
</dbReference>
<dbReference type="GO" id="GO:0008112">
    <property type="term" value="F:nicotinamide N-methyltransferase activity"/>
    <property type="evidence" value="ECO:0000314"/>
    <property type="project" value="UniProtKB"/>
</dbReference>
<dbReference type="GO" id="GO:0032259">
    <property type="term" value="P:methylation"/>
    <property type="evidence" value="ECO:0000314"/>
    <property type="project" value="MGI"/>
</dbReference>
<dbReference type="GO" id="GO:0006769">
    <property type="term" value="P:nicotinamide metabolic process"/>
    <property type="evidence" value="ECO:0000314"/>
    <property type="project" value="UniProtKB"/>
</dbReference>
<dbReference type="GO" id="GO:0045722">
    <property type="term" value="P:positive regulation of gluconeogenesis"/>
    <property type="evidence" value="ECO:0000315"/>
    <property type="project" value="UniProtKB"/>
</dbReference>
<dbReference type="GO" id="GO:0090312">
    <property type="term" value="P:positive regulation of protein deacetylation"/>
    <property type="evidence" value="ECO:0000315"/>
    <property type="project" value="UniProtKB"/>
</dbReference>
<dbReference type="FunFam" id="3.40.50.150:FF:000065">
    <property type="entry name" value="Phenylethanolamine N-methyltransferase"/>
    <property type="match status" value="1"/>
</dbReference>
<dbReference type="Gene3D" id="3.40.50.150">
    <property type="entry name" value="Vaccinia Virus protein VP39"/>
    <property type="match status" value="1"/>
</dbReference>
<dbReference type="InterPro" id="IPR025820">
    <property type="entry name" value="NNMT/PNMT/TEMT_CS"/>
</dbReference>
<dbReference type="InterPro" id="IPR000940">
    <property type="entry name" value="NNMT_TEMT_trans"/>
</dbReference>
<dbReference type="InterPro" id="IPR053384">
    <property type="entry name" value="SAM-dep_methyltransferase"/>
</dbReference>
<dbReference type="InterPro" id="IPR029063">
    <property type="entry name" value="SAM-dependent_MTases_sf"/>
</dbReference>
<dbReference type="NCBIfam" id="NF041360">
    <property type="entry name" value="GntF_guanitoxin"/>
    <property type="match status" value="1"/>
</dbReference>
<dbReference type="PANTHER" id="PTHR10867:SF32">
    <property type="entry name" value="NICOTINAMIDE N-METHYLTRANSFERASE"/>
    <property type="match status" value="1"/>
</dbReference>
<dbReference type="PANTHER" id="PTHR10867">
    <property type="entry name" value="NNMT/PNMT/TEMT FAMILY MEMBER"/>
    <property type="match status" value="1"/>
</dbReference>
<dbReference type="Pfam" id="PF01234">
    <property type="entry name" value="NNMT_PNMT_TEMT"/>
    <property type="match status" value="1"/>
</dbReference>
<dbReference type="PIRSF" id="PIRSF000384">
    <property type="entry name" value="PNMTase"/>
    <property type="match status" value="1"/>
</dbReference>
<dbReference type="SUPFAM" id="SSF53335">
    <property type="entry name" value="S-adenosyl-L-methionine-dependent methyltransferases"/>
    <property type="match status" value="1"/>
</dbReference>
<dbReference type="PROSITE" id="PS01100">
    <property type="entry name" value="NNMT_PNMT_TEMT"/>
    <property type="match status" value="1"/>
</dbReference>
<dbReference type="PROSITE" id="PS51681">
    <property type="entry name" value="SAM_MT_NNMT_PNMT_TEMT"/>
    <property type="match status" value="1"/>
</dbReference>
<reference key="1">
    <citation type="journal article" date="1997" name="Biochem. Pharmacol.">
        <title>Mouse liver nicotinamide N-methyltransferase: cDNA cloning, expression, and nucleotide sequence polymorphisms.</title>
        <authorList>
            <person name="Yan L."/>
            <person name="Otterness D.M."/>
            <person name="Craddock T.L."/>
            <person name="Weinshilboum R.M."/>
        </authorList>
    </citation>
    <scope>NUCLEOTIDE SEQUENCE [MRNA]</scope>
    <source>
        <strain>AKR/J</strain>
        <strain>C3H/HeJ</strain>
        <strain>C57BL/6J</strain>
        <strain>C57BR/cdJ</strain>
        <strain>DBA/2J</strain>
        <tissue>Liver</tissue>
    </source>
</reference>
<reference key="2">
    <citation type="journal article" date="1998" name="DNA Cell Biol.">
        <title>Mouse nicotinamide N-methyltransferase gene: molecular cloning, structural characterization, and chromosomal localization.</title>
        <authorList>
            <person name="Yan L."/>
            <person name="Otterness D.M."/>
            <person name="Kozak C.A."/>
            <person name="Weinshilboum R.M."/>
        </authorList>
    </citation>
    <scope>NUCLEOTIDE SEQUENCE [GENOMIC DNA]</scope>
    <source>
        <strain>C3H/HeJ</strain>
    </source>
</reference>
<reference key="3">
    <citation type="journal article" date="2004" name="Genome Res.">
        <title>The status, quality, and expansion of the NIH full-length cDNA project: the Mammalian Gene Collection (MGC).</title>
        <authorList>
            <consortium name="The MGC Project Team"/>
        </authorList>
    </citation>
    <scope>NUCLEOTIDE SEQUENCE [LARGE SCALE MRNA]</scope>
    <source>
        <strain>C57BL/6J</strain>
        <tissue>Mammary gland</tissue>
    </source>
</reference>
<reference key="4">
    <citation type="journal article" date="2014" name="Nature">
        <title>Nicotinamide N-methyltransferase knockdown protects against diet-induced obesity.</title>
        <authorList>
            <person name="Kraus D."/>
            <person name="Yang Q."/>
            <person name="Kong D."/>
            <person name="Banks A.S."/>
            <person name="Zhang L."/>
            <person name="Rodgers J.T."/>
            <person name="Pirinen E."/>
            <person name="Pulinilkunnil T.C."/>
            <person name="Gong F."/>
            <person name="Wang Y.C."/>
            <person name="Cen Y."/>
            <person name="Sauve A.A."/>
            <person name="Asara J.M."/>
            <person name="Peroni O.D."/>
            <person name="Monia B.P."/>
            <person name="Bhanot S."/>
            <person name="Alhonen L."/>
            <person name="Puigserver P."/>
            <person name="Kahn B.B."/>
        </authorList>
    </citation>
    <scope>FUNCTION</scope>
    <scope>TISSUE SPECIFICITY</scope>
    <scope>INDUCTION BY HIGH-FAT DIET</scope>
</reference>
<reference key="5">
    <citation type="journal article" date="2015" name="Nat. Med.">
        <title>Nicotinamide N-methyltransferase regulates hepatic nutrient metabolism through Sirt1 protein stabilization.</title>
        <authorList>
            <person name="Hong S."/>
            <person name="Moreno-Navarrete J.M."/>
            <person name="Wei X."/>
            <person name="Kikukawa Y."/>
            <person name="Tzameli I."/>
            <person name="Prasad D."/>
            <person name="Lee Y."/>
            <person name="Asara J.M."/>
            <person name="Fernandez-Real J.M."/>
            <person name="Maratos-Flier E."/>
            <person name="Pissios P."/>
        </authorList>
    </citation>
    <scope>FUNCTION</scope>
    <scope>CATALYTIC ACTIVITY</scope>
    <scope>MUTAGENESIS OF TYR-20 AND ALA-198</scope>
</reference>
<reference evidence="10" key="6">
    <citation type="submission" date="2006-08" db="PDB data bank">
        <title>The Crystal Structure of Mouse Nicotinamide N-methyltransferase in complex with SAH.</title>
        <authorList>
            <person name="Wu H."/>
            <person name="Min J."/>
            <person name="Zeng H."/>
            <person name="Loppnau P."/>
            <person name="Weigelt J."/>
            <person name="Sundstrom M."/>
            <person name="Arrowsmith C.H."/>
            <person name="Edwards A.M."/>
            <person name="Bochkarev A."/>
            <person name="Plotnikov A.N."/>
        </authorList>
    </citation>
    <scope>X-RAY CRYSTALLOGRAPHY (1.80 ANGSTROMS) IN COMPLEX WITH S-ADENOSYL-L-METHIONINE</scope>
</reference>
<reference key="7">
    <citation type="journal article" date="2018" name="Sci. Rep.">
        <title>A small molecule inhibitor of Nicotinamide N-methyltransferase for the treatment of metabolic disorders.</title>
        <authorList>
            <person name="Kannt A."/>
            <person name="Rajagopal S."/>
            <person name="Kadnur S.V."/>
            <person name="Suresh J."/>
            <person name="Bhamidipati R.K."/>
            <person name="Swaminathan S."/>
            <person name="Hallur M.S."/>
            <person name="Kristam R."/>
            <person name="Elvert R."/>
            <person name="Czech J."/>
            <person name="Pfenninger A."/>
            <person name="Rudolph C."/>
            <person name="Schreuder H."/>
            <person name="Chandrasekar D.V."/>
            <person name="Mane V.S."/>
            <person name="Birudukota S."/>
            <person name="Shaik S."/>
            <person name="Zope B.R."/>
            <person name="Burri R.R."/>
            <person name="Anand N.N."/>
            <person name="Thakur M.K."/>
            <person name="Singh M."/>
            <person name="Parveen R."/>
            <person name="Kandan S."/>
            <person name="Mullangi R."/>
            <person name="Yura T."/>
            <person name="Gosu R."/>
            <person name="Ruf S."/>
            <person name="Dhakshinamoorthy S."/>
        </authorList>
    </citation>
    <scope>X-RAY CRYSTALLOGRAPHY (1.99 ANGSTROMS) IN COMPLEX WITH S-ADENOSYL-L-METHIONINE AND INHIBITOR</scope>
    <scope>FUNCTION</scope>
    <scope>CATALYTIC ACTIVITY</scope>
    <scope>ACTIVITY REGULATION</scope>
</reference>